<evidence type="ECO:0000255" key="1">
    <source>
        <dbReference type="HAMAP-Rule" id="MF_01820"/>
    </source>
</evidence>
<evidence type="ECO:0000255" key="2">
    <source>
        <dbReference type="PROSITE-ProRule" id="PRU01058"/>
    </source>
</evidence>
<evidence type="ECO:0000305" key="3"/>
<proteinExistence type="inferred from homology"/>
<feature type="chain" id="PRO_0000171494" description="Small ribosomal subunit biogenesis GTPase RsgA">
    <location>
        <begin position="1"/>
        <end position="278"/>
    </location>
</feature>
<feature type="domain" description="CP-type G" evidence="2">
    <location>
        <begin position="62"/>
        <end position="218"/>
    </location>
</feature>
<feature type="binding site" evidence="1">
    <location>
        <begin position="112"/>
        <end position="115"/>
    </location>
    <ligand>
        <name>GTP</name>
        <dbReference type="ChEBI" id="CHEBI:37565"/>
    </ligand>
</feature>
<feature type="binding site" evidence="1">
    <location>
        <begin position="162"/>
        <end position="170"/>
    </location>
    <ligand>
        <name>GTP</name>
        <dbReference type="ChEBI" id="CHEBI:37565"/>
    </ligand>
</feature>
<feature type="binding site" evidence="1">
    <location>
        <position position="241"/>
    </location>
    <ligand>
        <name>Zn(2+)</name>
        <dbReference type="ChEBI" id="CHEBI:29105"/>
    </ligand>
</feature>
<feature type="binding site" evidence="1">
    <location>
        <position position="246"/>
    </location>
    <ligand>
        <name>Zn(2+)</name>
        <dbReference type="ChEBI" id="CHEBI:29105"/>
    </ligand>
</feature>
<feature type="binding site" evidence="1">
    <location>
        <position position="248"/>
    </location>
    <ligand>
        <name>Zn(2+)</name>
        <dbReference type="ChEBI" id="CHEBI:29105"/>
    </ligand>
</feature>
<feature type="binding site" evidence="1">
    <location>
        <position position="254"/>
    </location>
    <ligand>
        <name>Zn(2+)</name>
        <dbReference type="ChEBI" id="CHEBI:29105"/>
    </ligand>
</feature>
<feature type="sequence conflict" description="In Ref. 3; CAB97510." evidence="3" ref="3">
    <original>TDLDFDPME</original>
    <variation>QTLILIQWK</variation>
    <location>
        <begin position="114"/>
        <end position="122"/>
    </location>
</feature>
<gene>
    <name evidence="1" type="primary">rsgA</name>
    <name type="synonym">engC</name>
    <name type="ordered locus">MG110</name>
</gene>
<name>RSGA_MYCGE</name>
<dbReference type="EC" id="3.6.1.-" evidence="1"/>
<dbReference type="EMBL" id="L43967">
    <property type="protein sequence ID" value="AAC71328.1"/>
    <property type="molecule type" value="Genomic_DNA"/>
</dbReference>
<dbReference type="EMBL" id="X61518">
    <property type="protein sequence ID" value="CAB97510.1"/>
    <property type="molecule type" value="Genomic_DNA"/>
</dbReference>
<dbReference type="EMBL" id="U01714">
    <property type="protein sequence ID" value="AAC43187.1"/>
    <property type="molecule type" value="Unassigned_DNA"/>
</dbReference>
<dbReference type="RefSeq" id="WP_010869335.1">
    <property type="nucleotide sequence ID" value="NC_000908.2"/>
</dbReference>
<dbReference type="SMR" id="P47356"/>
<dbReference type="FunCoup" id="P47356">
    <property type="interactions" value="124"/>
</dbReference>
<dbReference type="STRING" id="243273.MG_110"/>
<dbReference type="GeneID" id="88282234"/>
<dbReference type="KEGG" id="mge:MG_110"/>
<dbReference type="eggNOG" id="COG1162">
    <property type="taxonomic scope" value="Bacteria"/>
</dbReference>
<dbReference type="HOGENOM" id="CLU_033617_2_1_14"/>
<dbReference type="InParanoid" id="P47356"/>
<dbReference type="OrthoDB" id="9809485at2"/>
<dbReference type="BioCyc" id="MGEN243273:G1GJ2-123-MONOMER"/>
<dbReference type="Proteomes" id="UP000000807">
    <property type="component" value="Chromosome"/>
</dbReference>
<dbReference type="GO" id="GO:0005737">
    <property type="term" value="C:cytoplasm"/>
    <property type="evidence" value="ECO:0007669"/>
    <property type="project" value="UniProtKB-SubCell"/>
</dbReference>
<dbReference type="GO" id="GO:0005525">
    <property type="term" value="F:GTP binding"/>
    <property type="evidence" value="ECO:0007669"/>
    <property type="project" value="UniProtKB-UniRule"/>
</dbReference>
<dbReference type="GO" id="GO:0003924">
    <property type="term" value="F:GTPase activity"/>
    <property type="evidence" value="ECO:0007669"/>
    <property type="project" value="UniProtKB-UniRule"/>
</dbReference>
<dbReference type="GO" id="GO:0046872">
    <property type="term" value="F:metal ion binding"/>
    <property type="evidence" value="ECO:0007669"/>
    <property type="project" value="UniProtKB-KW"/>
</dbReference>
<dbReference type="GO" id="GO:0019843">
    <property type="term" value="F:rRNA binding"/>
    <property type="evidence" value="ECO:0007669"/>
    <property type="project" value="UniProtKB-KW"/>
</dbReference>
<dbReference type="GO" id="GO:0042274">
    <property type="term" value="P:ribosomal small subunit biogenesis"/>
    <property type="evidence" value="ECO:0007669"/>
    <property type="project" value="UniProtKB-UniRule"/>
</dbReference>
<dbReference type="Gene3D" id="3.40.50.300">
    <property type="entry name" value="P-loop containing nucleotide triphosphate hydrolases"/>
    <property type="match status" value="1"/>
</dbReference>
<dbReference type="Gene3D" id="1.10.40.50">
    <property type="entry name" value="Probable gtpase engc, domain 3"/>
    <property type="match status" value="1"/>
</dbReference>
<dbReference type="HAMAP" id="MF_01820">
    <property type="entry name" value="GTPase_RsgA"/>
    <property type="match status" value="1"/>
</dbReference>
<dbReference type="InterPro" id="IPR030378">
    <property type="entry name" value="G_CP_dom"/>
</dbReference>
<dbReference type="InterPro" id="IPR027417">
    <property type="entry name" value="P-loop_NTPase"/>
</dbReference>
<dbReference type="InterPro" id="IPR004881">
    <property type="entry name" value="Ribosome_biogen_GTPase_RsgA"/>
</dbReference>
<dbReference type="InterPro" id="IPR010914">
    <property type="entry name" value="RsgA_GTPase_dom"/>
</dbReference>
<dbReference type="NCBIfam" id="TIGR00157">
    <property type="entry name" value="ribosome small subunit-dependent GTPase A"/>
    <property type="match status" value="1"/>
</dbReference>
<dbReference type="PANTHER" id="PTHR32120">
    <property type="entry name" value="SMALL RIBOSOMAL SUBUNIT BIOGENESIS GTPASE RSGA"/>
    <property type="match status" value="1"/>
</dbReference>
<dbReference type="PANTHER" id="PTHR32120:SF11">
    <property type="entry name" value="SMALL RIBOSOMAL SUBUNIT BIOGENESIS GTPASE RSGA 1, MITOCHONDRIAL-RELATED"/>
    <property type="match status" value="1"/>
</dbReference>
<dbReference type="Pfam" id="PF03193">
    <property type="entry name" value="RsgA_GTPase"/>
    <property type="match status" value="1"/>
</dbReference>
<dbReference type="SUPFAM" id="SSF52540">
    <property type="entry name" value="P-loop containing nucleoside triphosphate hydrolases"/>
    <property type="match status" value="1"/>
</dbReference>
<dbReference type="PROSITE" id="PS50936">
    <property type="entry name" value="ENGC_GTPASE"/>
    <property type="match status" value="1"/>
</dbReference>
<dbReference type="PROSITE" id="PS51721">
    <property type="entry name" value="G_CP"/>
    <property type="match status" value="1"/>
</dbReference>
<keyword id="KW-0963">Cytoplasm</keyword>
<keyword id="KW-0342">GTP-binding</keyword>
<keyword id="KW-0378">Hydrolase</keyword>
<keyword id="KW-0479">Metal-binding</keyword>
<keyword id="KW-0547">Nucleotide-binding</keyword>
<keyword id="KW-1185">Reference proteome</keyword>
<keyword id="KW-0690">Ribosome biogenesis</keyword>
<keyword id="KW-0694">RNA-binding</keyword>
<keyword id="KW-0699">rRNA-binding</keyword>
<keyword id="KW-0862">Zinc</keyword>
<reference key="1">
    <citation type="journal article" date="1995" name="Science">
        <title>The minimal gene complement of Mycoplasma genitalium.</title>
        <authorList>
            <person name="Fraser C.M."/>
            <person name="Gocayne J.D."/>
            <person name="White O."/>
            <person name="Adams M.D."/>
            <person name="Clayton R.A."/>
            <person name="Fleischmann R.D."/>
            <person name="Bult C.J."/>
            <person name="Kerlavage A.R."/>
            <person name="Sutton G.G."/>
            <person name="Kelley J.M."/>
            <person name="Fritchman J.L."/>
            <person name="Weidman J.F."/>
            <person name="Small K.V."/>
            <person name="Sandusky M."/>
            <person name="Fuhrmann J.L."/>
            <person name="Nguyen D.T."/>
            <person name="Utterback T.R."/>
            <person name="Saudek D.M."/>
            <person name="Phillips C.A."/>
            <person name="Merrick J.M."/>
            <person name="Tomb J.-F."/>
            <person name="Dougherty B.A."/>
            <person name="Bott K.F."/>
            <person name="Hu P.-C."/>
            <person name="Lucier T.S."/>
            <person name="Peterson S.N."/>
            <person name="Smith H.O."/>
            <person name="Hutchison C.A. III"/>
            <person name="Venter J.C."/>
        </authorList>
    </citation>
    <scope>NUCLEOTIDE SEQUENCE [LARGE SCALE GENOMIC DNA]</scope>
    <source>
        <strain>ATCC 33530 / DSM 19775 / NCTC 10195 / G37</strain>
    </source>
</reference>
<reference key="2">
    <citation type="submission" date="1998-10" db="EMBL/GenBank/DDBJ databases">
        <authorList>
            <person name="Fraser C.M."/>
            <person name="Gocayne J.D."/>
            <person name="White O."/>
            <person name="Adams M.D."/>
            <person name="Clayton R.A."/>
            <person name="Fleischmann R.D."/>
            <person name="Bult C.J."/>
            <person name="Kerlavage A.R."/>
            <person name="Sutton G.G."/>
            <person name="Kelley J.M."/>
            <person name="Fritchman J.L."/>
            <person name="Weidman J.F."/>
            <person name="Small K.V."/>
            <person name="Sandusky M."/>
            <person name="Fuhrmann J.L."/>
            <person name="Nguyen D.T."/>
            <person name="Utterback T.R."/>
            <person name="Saudek D.M."/>
            <person name="Phillips C.A."/>
            <person name="Merrick J.M."/>
            <person name="Tomb J.-F."/>
            <person name="Dougherty B.A."/>
            <person name="Bott K.F."/>
            <person name="Hu P.-C."/>
            <person name="Lucier T.S."/>
            <person name="Peterson S.N."/>
            <person name="Smith H.O."/>
            <person name="Hutchison C.A. III"/>
            <person name="Venter J.C."/>
        </authorList>
    </citation>
    <scope>SEQUENCE REVISION</scope>
</reference>
<reference key="3">
    <citation type="journal article" date="1991" name="Nucleic Acids Res.">
        <title>A random sequencing approach for placing markers on the physical map of Mycoplasma genitalium.</title>
        <authorList>
            <person name="Peterson S.N."/>
            <person name="Schramm N."/>
            <person name="Hu P.-C."/>
            <person name="Bott K.F."/>
            <person name="Hutchison C.A. III"/>
        </authorList>
    </citation>
    <scope>NUCLEOTIDE SEQUENCE [GENOMIC DNA] OF 90-122</scope>
    <source>
        <strain>ATCC 33530 / DSM 19775 / NCTC 10195 / G37</strain>
    </source>
</reference>
<reference key="4">
    <citation type="journal article" date="1993" name="J. Bacteriol.">
        <title>A survey of the Mycoplasma genitalium genome by using random sequencing.</title>
        <authorList>
            <person name="Peterson S.N."/>
            <person name="Hu P.-C."/>
            <person name="Bott K.F."/>
            <person name="Hutchison C.A. III"/>
        </authorList>
    </citation>
    <scope>NUCLEOTIDE SEQUENCE [GENOMIC DNA] OF 169-265</scope>
    <source>
        <strain>ATCC 33530 / DSM 19775 / NCTC 10195 / G37</strain>
    </source>
</reference>
<comment type="function">
    <text evidence="1">One of several proteins that assist in the late maturation steps of the functional core of the 30S ribosomal subunit. Helps release RbfA from mature subunits. May play a role in the assembly of ribosomal proteins into the subunit. Circularly permuted GTPase that catalyzes slow GTP hydrolysis, GTPase activity is stimulated by the 30S ribosomal subunit.</text>
</comment>
<comment type="cofactor">
    <cofactor evidence="1">
        <name>Zn(2+)</name>
        <dbReference type="ChEBI" id="CHEBI:29105"/>
    </cofactor>
    <text evidence="1">Binds 1 zinc ion per subunit.</text>
</comment>
<comment type="subunit">
    <text evidence="1">Monomer. Associates with 30S ribosomal subunit, binds 16S rRNA.</text>
</comment>
<comment type="subcellular location">
    <subcellularLocation>
        <location evidence="1">Cytoplasm</location>
    </subcellularLocation>
</comment>
<comment type="similarity">
    <text evidence="1">Belongs to the TRAFAC class YlqF/YawG GTPase family. RsgA subfamily.</text>
</comment>
<protein>
    <recommendedName>
        <fullName evidence="1">Small ribosomal subunit biogenesis GTPase RsgA</fullName>
        <ecNumber evidence="1">3.6.1.-</ecNumber>
    </recommendedName>
</protein>
<sequence length="278" mass="32147">MPDSNFGIVLQSLAKQCKVFWNNQIITAFPQKKLQWKNDFKLMVGDRVQLEDGAITKVLARKNELTRPRVANVDQIVLIQSLVQPKINWIQLLKLLVYFNAKLIDEIPILITKTDLDFDPMEKQKLIDLKQFNYQLFFVSKNEPLPSELIDIFSKKLSVFTGQSGVGKSSLINRLDPSLKQKIQALSVNKFGKNTTTKTTLFSFRGGFICDTPGFNVISIKNLKILAAQHFVGFQKMISKCHFSNCYHQYEKDCFVTTSVMKNRYPSWLYEKYRKMIN</sequence>
<accession>P47356</accession>
<accession>Q49474</accession>
<organism>
    <name type="scientific">Mycoplasma genitalium (strain ATCC 33530 / DSM 19775 / NCTC 10195 / G37)</name>
    <name type="common">Mycoplasmoides genitalium</name>
    <dbReference type="NCBI Taxonomy" id="243273"/>
    <lineage>
        <taxon>Bacteria</taxon>
        <taxon>Bacillati</taxon>
        <taxon>Mycoplasmatota</taxon>
        <taxon>Mycoplasmoidales</taxon>
        <taxon>Mycoplasmoidaceae</taxon>
        <taxon>Mycoplasmoides</taxon>
    </lineage>
</organism>